<evidence type="ECO:0000250" key="1">
    <source>
        <dbReference type="UniProtKB" id="O75145"/>
    </source>
</evidence>
<evidence type="ECO:0000250" key="2">
    <source>
        <dbReference type="UniProtKB" id="Q13136"/>
    </source>
</evidence>
<evidence type="ECO:0000250" key="3">
    <source>
        <dbReference type="UniProtKB" id="Q91Z79"/>
    </source>
</evidence>
<evidence type="ECO:0000255" key="4"/>
<evidence type="ECO:0000255" key="5">
    <source>
        <dbReference type="PROSITE-ProRule" id="PRU00184"/>
    </source>
</evidence>
<evidence type="ECO:0000256" key="6">
    <source>
        <dbReference type="SAM" id="MobiDB-lite"/>
    </source>
</evidence>
<evidence type="ECO:0000269" key="7">
    <source>
    </source>
</evidence>
<evidence type="ECO:0000303" key="8">
    <source>
    </source>
</evidence>
<evidence type="ECO:0000305" key="9"/>
<evidence type="ECO:0000312" key="10">
    <source>
        <dbReference type="EMBL" id="ACE63189.1"/>
    </source>
</evidence>
<evidence type="ECO:0007744" key="11">
    <source>
    </source>
</evidence>
<evidence type="ECO:0007744" key="12">
    <source>
    </source>
</evidence>
<evidence type="ECO:0007829" key="13">
    <source>
        <dbReference type="PDB" id="4UWX"/>
    </source>
</evidence>
<evidence type="ECO:0007829" key="14">
    <source>
        <dbReference type="PDB" id="6KIP"/>
    </source>
</evidence>
<evidence type="ECO:0007829" key="15">
    <source>
        <dbReference type="PDB" id="6KR4"/>
    </source>
</evidence>
<gene>
    <name type="primary">Ppfia3</name>
</gene>
<reference key="1">
    <citation type="journal article" date="2009" name="Genomics">
        <title>The mouse and human Liprin-alpha family of scaffolding proteins: genomic organization, expression profiling and regulation by alternative splicing.</title>
        <authorList>
            <person name="Zurner M."/>
            <person name="Schoch S."/>
        </authorList>
    </citation>
    <scope>NUCLEOTIDE SEQUENCE [MRNA] (ISOFORM 1)</scope>
    <source>
        <strain evidence="10">C57BL/6J</strain>
    </source>
</reference>
<reference key="2">
    <citation type="journal article" date="2009" name="PLoS Biol.">
        <title>Lineage-specific biology revealed by a finished genome assembly of the mouse.</title>
        <authorList>
            <person name="Church D.M."/>
            <person name="Goodstadt L."/>
            <person name="Hillier L.W."/>
            <person name="Zody M.C."/>
            <person name="Goldstein S."/>
            <person name="She X."/>
            <person name="Bult C.J."/>
            <person name="Agarwala R."/>
            <person name="Cherry J.L."/>
            <person name="DiCuccio M."/>
            <person name="Hlavina W."/>
            <person name="Kapustin Y."/>
            <person name="Meric P."/>
            <person name="Maglott D."/>
            <person name="Birtle Z."/>
            <person name="Marques A.C."/>
            <person name="Graves T."/>
            <person name="Zhou S."/>
            <person name="Teague B."/>
            <person name="Potamousis K."/>
            <person name="Churas C."/>
            <person name="Place M."/>
            <person name="Herschleb J."/>
            <person name="Runnheim R."/>
            <person name="Forrest D."/>
            <person name="Amos-Landgraf J."/>
            <person name="Schwartz D.C."/>
            <person name="Cheng Z."/>
            <person name="Lindblad-Toh K."/>
            <person name="Eichler E.E."/>
            <person name="Ponting C.P."/>
        </authorList>
    </citation>
    <scope>NUCLEOTIDE SEQUENCE [LARGE SCALE GENOMIC DNA]</scope>
    <source>
        <strain>C57BL/6J</strain>
    </source>
</reference>
<reference key="3">
    <citation type="journal article" date="2004" name="Genome Res.">
        <title>The status, quality, and expansion of the NIH full-length cDNA project: the Mammalian Gene Collection (MGC).</title>
        <authorList>
            <consortium name="The MGC Project Team"/>
        </authorList>
    </citation>
    <scope>NUCLEOTIDE SEQUENCE [LARGE SCALE MRNA] (ISOFORM 2)</scope>
    <source>
        <strain>C57BL/6J</strain>
        <tissue>Brain</tissue>
    </source>
</reference>
<reference key="4">
    <citation type="journal article" date="2006" name="Mol. Cell. Proteomics">
        <title>Comprehensive identification of phosphorylation sites in postsynaptic density preparations.</title>
        <authorList>
            <person name="Trinidad J.C."/>
            <person name="Specht C.G."/>
            <person name="Thalhammer A."/>
            <person name="Schoepfer R."/>
            <person name="Burlingame A.L."/>
        </authorList>
    </citation>
    <scope>PHOSPHORYLATION [LARGE SCALE ANALYSIS] AT SER-645</scope>
    <scope>IDENTIFICATION BY MASS SPECTROMETRY [LARGE SCALE ANALYSIS]</scope>
    <source>
        <tissue>Brain</tissue>
    </source>
</reference>
<reference key="5">
    <citation type="journal article" date="2007" name="Mol. Cell. Proteomics">
        <title>Qualitative and quantitative analyses of protein phosphorylation in naive and stimulated mouse synaptosomal preparations.</title>
        <authorList>
            <person name="Munton R.P."/>
            <person name="Tweedie-Cullen R."/>
            <person name="Livingstone-Zatchej M."/>
            <person name="Weinandy F."/>
            <person name="Waidelich M."/>
            <person name="Longo D."/>
            <person name="Gehrig P."/>
            <person name="Potthast F."/>
            <person name="Rutishauser D."/>
            <person name="Gerrits B."/>
            <person name="Panse C."/>
            <person name="Schlapbach R."/>
            <person name="Mansuy I.M."/>
        </authorList>
    </citation>
    <scope>IDENTIFICATION BY MASS SPECTROMETRY [LARGE SCALE ANALYSIS]</scope>
    <source>
        <tissue>Brain cortex</tissue>
    </source>
</reference>
<reference key="6">
    <citation type="journal article" date="2010" name="Cell">
        <title>A tissue-specific atlas of mouse protein phosphorylation and expression.</title>
        <authorList>
            <person name="Huttlin E.L."/>
            <person name="Jedrychowski M.P."/>
            <person name="Elias J.E."/>
            <person name="Goswami T."/>
            <person name="Rad R."/>
            <person name="Beausoleil S.A."/>
            <person name="Villen J."/>
            <person name="Haas W."/>
            <person name="Sowa M.E."/>
            <person name="Gygi S.P."/>
        </authorList>
    </citation>
    <scope>PHOSPHORYLATION [LARGE SCALE ANALYSIS] AT SER-17; SER-508; SER-645 AND THR-714</scope>
    <scope>IDENTIFICATION BY MASS SPECTROMETRY [LARGE SCALE ANALYSIS]</scope>
    <source>
        <tissue>Brain</tissue>
    </source>
</reference>
<reference key="7">
    <citation type="journal article" date="2013" name="Histochem. Cell Biol.">
        <title>Liprin alpha3: a putative estrogen regulated acrosomal protein.</title>
        <authorList>
            <person name="Joshi C.S."/>
            <person name="Suryawanshi A.R."/>
            <person name="Khan S.A."/>
            <person name="Balasinor N.H."/>
            <person name="Khole V.V."/>
        </authorList>
    </citation>
    <scope>SUBCELLULAR LOCATION</scope>
    <scope>TISSUE SPECIFICITY</scope>
</reference>
<sequence length="1194" mass="133426">MMCEVMPTISEDGRRGSALGPDEAGGELERLMVTMLTERERLLETLREAQDGLATAQLRLRELGHEKDSLQRQLSIALPQEFAALTKELNLCREQLLEREEEIAELKAERNNTRLLLEHLECLVSRHERSLRMTVVKRQAQSPGGVSSEVEVLKALKSLFEHHKALDEKVRERLRMALERVAVLEEELELSNQEALNLRDQLSRRRSGLEEPGKDGDGQTLANGLGPVGESNRRTAELEEALERQRAEVCQLRERLAVLCRQMSQLEEELGTAHRELGKAEEANSKLQRDLKEALAQREDMEERITTLEKRYLSAQREATSLHDANDKLENELASKESLYRQSEEKSRQLAEWLDDAKQKLQQTLQKAETLPEIEAQLAQRVAALNKAEERHGNFEERLRQLEAQLEEKNQELQRARQREKMNDDHNKRLSETVDKLLSESNERLQLHLKERMGALEEKNSLSEEIANMKKLQDELLLNKEQLLAEMERMQMEIDQLRGRPPSSYSRSLPGSALELRYSQAPTLPSGAPLDPYGAGSGRAGKRGRWSGAKDESSKDWDRSAPAGSIPPPFPGELDGSDEEEAEGMFGAELLSPSGQADVQTLAIMLQEQLEAINKEIKLIQEEKETTEQRAEELESRVSSSGLDSLGRYRSSCSLPPSLTTSTLASPSPPSSGHSTPRLAPPSPAREGTDKTNHVSKEEAGVPRGEGPAVPGDTPPPTPRSARLERMAQALALQAGSPEDGAPPRGSESTPDSLHKAPKRKSIKSSIGRLFGKKEKGRMGPPGRESVSLAGTPSDETLATDPLGLAKLTGPGDKDRRNKRKHELLEEACRQGLPFAAWDGPTVVSWLELWVGMPAWYVAACRANVKSGAIMANLSDTEIQREIGISNPLHRLKLRLAIQEMVSLTSPSAPASSRTPTGNVWMTHEEMESLTAATKPETKEISWEQILAYGDMNHEWVGNDWLPSLGLPQYRSYFMESLVDARMLDHLNKKELRGQLKMVDSFHRVSLHYGIMCLKRLNYDRKDLERRREESQTQIRDVMVWSNERVMGWVSGLGLKEFATNLTESGVHGALLALDETFDYSDLALLLQIPTQNAQARQLLEKEFSNLISLGTDRRLDEDSAKSFSRSPSWRKMFREKDLRGVTPDSAEMLPPNFRSAAAGALGSPGLPLRKLQPEGQTSGSSRADGVSVRTYSC</sequence>
<keyword id="KW-0002">3D-structure</keyword>
<keyword id="KW-0025">Alternative splicing</keyword>
<keyword id="KW-0175">Coiled coil</keyword>
<keyword id="KW-0963">Cytoplasm</keyword>
<keyword id="KW-0968">Cytoplasmic vesicle</keyword>
<keyword id="KW-0597">Phosphoprotein</keyword>
<keyword id="KW-1185">Reference proteome</keyword>
<keyword id="KW-0677">Repeat</keyword>
<feature type="chain" id="PRO_0000191030" description="Liprin-alpha-3">
    <location>
        <begin position="1"/>
        <end position="1194"/>
    </location>
</feature>
<feature type="domain" description="SAM 1" evidence="5">
    <location>
        <begin position="838"/>
        <end position="904"/>
    </location>
</feature>
<feature type="domain" description="SAM 2" evidence="5">
    <location>
        <begin position="953"/>
        <end position="1017"/>
    </location>
</feature>
<feature type="domain" description="SAM 3" evidence="5">
    <location>
        <begin position="1041"/>
        <end position="1110"/>
    </location>
</feature>
<feature type="region of interest" description="Disordered" evidence="6">
    <location>
        <begin position="1"/>
        <end position="23"/>
    </location>
</feature>
<feature type="region of interest" description="Disordered" evidence="6">
    <location>
        <begin position="201"/>
        <end position="233"/>
    </location>
</feature>
<feature type="region of interest" description="Disordered" evidence="6">
    <location>
        <begin position="522"/>
        <end position="588"/>
    </location>
</feature>
<feature type="region of interest" description="Disordered" evidence="6">
    <location>
        <begin position="624"/>
        <end position="817"/>
    </location>
</feature>
<feature type="region of interest" description="Disordered" evidence="6">
    <location>
        <begin position="1157"/>
        <end position="1194"/>
    </location>
</feature>
<feature type="coiled-coil region" evidence="4">
    <location>
        <begin position="26"/>
        <end position="133"/>
    </location>
</feature>
<feature type="coiled-coil region" evidence="4">
    <location>
        <begin position="171"/>
        <end position="501"/>
    </location>
</feature>
<feature type="coiled-coil region" evidence="4">
    <location>
        <begin position="596"/>
        <end position="644"/>
    </location>
</feature>
<feature type="coiled-coil region" evidence="4">
    <location>
        <begin position="1014"/>
        <end position="1040"/>
    </location>
</feature>
<feature type="compositionally biased region" description="Basic and acidic residues" evidence="6">
    <location>
        <begin position="201"/>
        <end position="217"/>
    </location>
</feature>
<feature type="compositionally biased region" description="Basic and acidic residues" evidence="6">
    <location>
        <begin position="548"/>
        <end position="559"/>
    </location>
</feature>
<feature type="compositionally biased region" description="Basic and acidic residues" evidence="6">
    <location>
        <begin position="624"/>
        <end position="636"/>
    </location>
</feature>
<feature type="compositionally biased region" description="Low complexity" evidence="6">
    <location>
        <begin position="651"/>
        <end position="666"/>
    </location>
</feature>
<feature type="compositionally biased region" description="Basic and acidic residues" evidence="6">
    <location>
        <begin position="687"/>
        <end position="701"/>
    </location>
</feature>
<feature type="compositionally biased region" description="Low complexity" evidence="6">
    <location>
        <begin position="1157"/>
        <end position="1169"/>
    </location>
</feature>
<feature type="modified residue" description="Phosphoserine" evidence="12">
    <location>
        <position position="17"/>
    </location>
</feature>
<feature type="modified residue" description="Phosphoserine" evidence="1">
    <location>
        <position position="142"/>
    </location>
</feature>
<feature type="modified residue" description="Phosphoserine" evidence="1">
    <location>
        <position position="207"/>
    </location>
</feature>
<feature type="modified residue" description="Phosphoserine" evidence="2">
    <location>
        <position position="431"/>
    </location>
</feature>
<feature type="modified residue" description="Phosphoserine" evidence="12">
    <location>
        <position position="508"/>
    </location>
</feature>
<feature type="modified residue" description="Phosphoserine" evidence="2">
    <location>
        <position position="640"/>
    </location>
</feature>
<feature type="modified residue" description="Phosphoserine" evidence="11 12">
    <location>
        <position position="645"/>
    </location>
</feature>
<feature type="modified residue" description="Phosphoserine" evidence="2">
    <location>
        <position position="668"/>
    </location>
</feature>
<feature type="modified residue" description="Phosphoserine" evidence="1">
    <location>
        <position position="683"/>
    </location>
</feature>
<feature type="modified residue" description="Phosphothreonine" evidence="12">
    <location>
        <position position="714"/>
    </location>
</feature>
<feature type="modified residue" description="Phosphoserine" evidence="2">
    <location>
        <position position="737"/>
    </location>
</feature>
<feature type="modified residue" description="Phosphothreonine" evidence="3">
    <location>
        <position position="792"/>
    </location>
</feature>
<feature type="modified residue" description="Phosphoserine" evidence="3">
    <location>
        <position position="794"/>
    </location>
</feature>
<feature type="modified residue" description="Phosphoserine" evidence="2">
    <location>
        <position position="1123"/>
    </location>
</feature>
<feature type="modified residue" description="Phosphoserine" evidence="1">
    <location>
        <position position="1164"/>
    </location>
</feature>
<feature type="splice variant" id="VSP_057923" description="In isoform 2." evidence="8">
    <location>
        <begin position="178"/>
        <end position="328"/>
    </location>
</feature>
<feature type="helix" evidence="13">
    <location>
        <begin position="719"/>
        <end position="731"/>
    </location>
</feature>
<feature type="helix" evidence="14">
    <location>
        <begin position="813"/>
        <end position="830"/>
    </location>
</feature>
<feature type="helix" evidence="14">
    <location>
        <begin position="835"/>
        <end position="837"/>
    </location>
</feature>
<feature type="helix" evidence="14">
    <location>
        <begin position="840"/>
        <end position="849"/>
    </location>
</feature>
<feature type="helix" evidence="14">
    <location>
        <begin position="855"/>
        <end position="864"/>
    </location>
</feature>
<feature type="helix" evidence="14">
    <location>
        <begin position="868"/>
        <end position="872"/>
    </location>
</feature>
<feature type="helix" evidence="14">
    <location>
        <begin position="876"/>
        <end position="882"/>
    </location>
</feature>
<feature type="helix" evidence="14">
    <location>
        <begin position="888"/>
        <end position="904"/>
    </location>
</feature>
<feature type="helix" evidence="14">
    <location>
        <begin position="954"/>
        <end position="959"/>
    </location>
</feature>
<feature type="helix" evidence="14">
    <location>
        <begin position="961"/>
        <end position="964"/>
    </location>
</feature>
<feature type="helix" evidence="14">
    <location>
        <begin position="968"/>
        <end position="970"/>
    </location>
</feature>
<feature type="helix" evidence="14">
    <location>
        <begin position="971"/>
        <end position="976"/>
    </location>
</feature>
<feature type="helix" evidence="14">
    <location>
        <begin position="981"/>
        <end position="984"/>
    </location>
</feature>
<feature type="helix" evidence="14">
    <location>
        <begin position="989"/>
        <end position="993"/>
    </location>
</feature>
<feature type="turn" evidence="14">
    <location>
        <begin position="994"/>
        <end position="996"/>
    </location>
</feature>
<feature type="helix" evidence="14">
    <location>
        <begin position="1001"/>
        <end position="1016"/>
    </location>
</feature>
<feature type="turn" evidence="14">
    <location>
        <begin position="1017"/>
        <end position="1019"/>
    </location>
</feature>
<feature type="helix" evidence="14">
    <location>
        <begin position="1021"/>
        <end position="1029"/>
    </location>
</feature>
<feature type="strand" evidence="14">
    <location>
        <begin position="1032"/>
        <end position="1035"/>
    </location>
</feature>
<feature type="helix" evidence="14">
    <location>
        <begin position="1038"/>
        <end position="1040"/>
    </location>
</feature>
<feature type="helix" evidence="14">
    <location>
        <begin position="1043"/>
        <end position="1052"/>
    </location>
</feature>
<feature type="helix" evidence="14">
    <location>
        <begin position="1056"/>
        <end position="1059"/>
    </location>
</feature>
<feature type="helix" evidence="14">
    <location>
        <begin position="1060"/>
        <end position="1062"/>
    </location>
</feature>
<feature type="turn" evidence="15">
    <location>
        <begin position="1063"/>
        <end position="1066"/>
    </location>
</feature>
<feature type="helix" evidence="14">
    <location>
        <begin position="1069"/>
        <end position="1074"/>
    </location>
</feature>
<feature type="helix" evidence="14">
    <location>
        <begin position="1080"/>
        <end position="1086"/>
    </location>
</feature>
<feature type="helix" evidence="14">
    <location>
        <begin position="1094"/>
        <end position="1111"/>
    </location>
</feature>
<proteinExistence type="evidence at protein level"/>
<dbReference type="EMBL" id="EU568871">
    <property type="protein sequence ID" value="ACE63189.1"/>
    <property type="molecule type" value="mRNA"/>
</dbReference>
<dbReference type="EMBL" id="AC150897">
    <property type="status" value="NOT_ANNOTATED_CDS"/>
    <property type="molecule type" value="Genomic_DNA"/>
</dbReference>
<dbReference type="EMBL" id="AC151602">
    <property type="status" value="NOT_ANNOTATED_CDS"/>
    <property type="molecule type" value="Genomic_DNA"/>
</dbReference>
<dbReference type="EMBL" id="BC058404">
    <property type="protein sequence ID" value="AAH58404.1"/>
    <property type="molecule type" value="mRNA"/>
</dbReference>
<dbReference type="CCDS" id="CCDS52246.1">
    <molecule id="P60469-1"/>
</dbReference>
<dbReference type="RefSeq" id="NP_084017.2">
    <molecule id="P60469-1"/>
    <property type="nucleotide sequence ID" value="NM_029741.2"/>
</dbReference>
<dbReference type="RefSeq" id="XP_006541336.1">
    <molecule id="P60469-1"/>
    <property type="nucleotide sequence ID" value="XM_006541273.2"/>
</dbReference>
<dbReference type="RefSeq" id="XP_011249214.1">
    <molecule id="P60469-1"/>
    <property type="nucleotide sequence ID" value="XM_011250912.4"/>
</dbReference>
<dbReference type="RefSeq" id="XP_036009444.1">
    <molecule id="P60469-1"/>
    <property type="nucleotide sequence ID" value="XM_036153551.1"/>
</dbReference>
<dbReference type="PDB" id="4UWX">
    <property type="method" value="X-ray"/>
    <property type="resolution" value="1.65 A"/>
    <property type="chains" value="C/D=718-738"/>
</dbReference>
<dbReference type="PDB" id="6KIP">
    <property type="method" value="X-ray"/>
    <property type="resolution" value="1.91 A"/>
    <property type="chains" value="B=806-1127"/>
</dbReference>
<dbReference type="PDB" id="6KR4">
    <property type="method" value="X-ray"/>
    <property type="resolution" value="2.85 A"/>
    <property type="chains" value="E/F/G/H=806-1126"/>
</dbReference>
<dbReference type="PDBsum" id="4UWX"/>
<dbReference type="PDBsum" id="6KIP"/>
<dbReference type="PDBsum" id="6KR4"/>
<dbReference type="SMR" id="P60469"/>
<dbReference type="BioGRID" id="218314">
    <property type="interactions" value="27"/>
</dbReference>
<dbReference type="FunCoup" id="P60469">
    <property type="interactions" value="728"/>
</dbReference>
<dbReference type="IntAct" id="P60469">
    <property type="interactions" value="5"/>
</dbReference>
<dbReference type="MINT" id="P60469"/>
<dbReference type="STRING" id="10090.ENSMUSP00000003961"/>
<dbReference type="GlyGen" id="P60469">
    <property type="glycosylation" value="5 sites, 1 N-linked glycan (1 site), 1 O-linked glycan (3 sites)"/>
</dbReference>
<dbReference type="iPTMnet" id="P60469"/>
<dbReference type="PhosphoSitePlus" id="P60469"/>
<dbReference type="SwissPalm" id="P60469"/>
<dbReference type="jPOST" id="P60469"/>
<dbReference type="PaxDb" id="10090-ENSMUSP00000003961"/>
<dbReference type="PeptideAtlas" id="P60469"/>
<dbReference type="ProteomicsDB" id="265076">
    <molecule id="P60469-1"/>
</dbReference>
<dbReference type="ProteomicsDB" id="265077">
    <molecule id="P60469-2"/>
</dbReference>
<dbReference type="Pumba" id="P60469"/>
<dbReference type="Antibodypedia" id="31915">
    <property type="antibodies" value="65 antibodies from 22 providers"/>
</dbReference>
<dbReference type="DNASU" id="76787"/>
<dbReference type="Ensembl" id="ENSMUST00000003961.16">
    <molecule id="P60469-1"/>
    <property type="protein sequence ID" value="ENSMUSP00000003961.9"/>
    <property type="gene ID" value="ENSMUSG00000003863.19"/>
</dbReference>
<dbReference type="Ensembl" id="ENSMUST00000211067.2">
    <molecule id="P60469-1"/>
    <property type="protein sequence ID" value="ENSMUSP00000148200.2"/>
    <property type="gene ID" value="ENSMUSG00000003863.19"/>
</dbReference>
<dbReference type="GeneID" id="76787"/>
<dbReference type="KEGG" id="mmu:76787"/>
<dbReference type="UCSC" id="uc012fkh.1">
    <property type="organism name" value="mouse"/>
</dbReference>
<dbReference type="AGR" id="MGI:1924037"/>
<dbReference type="CTD" id="8541"/>
<dbReference type="MGI" id="MGI:1924037">
    <property type="gene designation" value="Ppfia3"/>
</dbReference>
<dbReference type="VEuPathDB" id="HostDB:ENSMUSG00000003863"/>
<dbReference type="eggNOG" id="KOG0249">
    <property type="taxonomic scope" value="Eukaryota"/>
</dbReference>
<dbReference type="GeneTree" id="ENSGT01050000244900"/>
<dbReference type="InParanoid" id="P60469"/>
<dbReference type="OMA" id="LMMMCEV"/>
<dbReference type="OrthoDB" id="2132119at2759"/>
<dbReference type="PhylomeDB" id="P60469"/>
<dbReference type="TreeFam" id="TF314207"/>
<dbReference type="Reactome" id="R-MMU-181429">
    <property type="pathway name" value="Serotonin Neurotransmitter Release Cycle"/>
</dbReference>
<dbReference type="Reactome" id="R-MMU-181430">
    <property type="pathway name" value="Norepinephrine Neurotransmitter Release Cycle"/>
</dbReference>
<dbReference type="Reactome" id="R-MMU-210500">
    <property type="pathway name" value="Glutamate Neurotransmitter Release Cycle"/>
</dbReference>
<dbReference type="Reactome" id="R-MMU-212676">
    <property type="pathway name" value="Dopamine Neurotransmitter Release Cycle"/>
</dbReference>
<dbReference type="Reactome" id="R-MMU-264642">
    <property type="pathway name" value="Acetylcholine Neurotransmitter Release Cycle"/>
</dbReference>
<dbReference type="Reactome" id="R-MMU-388844">
    <property type="pathway name" value="Receptor-type tyrosine-protein phosphatases"/>
</dbReference>
<dbReference type="BioGRID-ORCS" id="76787">
    <property type="hits" value="5 hits in 76 CRISPR screens"/>
</dbReference>
<dbReference type="CD-CODE" id="CE726F99">
    <property type="entry name" value="Postsynaptic density"/>
</dbReference>
<dbReference type="ChiTaRS" id="Ppfia3">
    <property type="organism name" value="mouse"/>
</dbReference>
<dbReference type="PRO" id="PR:P60469"/>
<dbReference type="Proteomes" id="UP000000589">
    <property type="component" value="Chromosome 7"/>
</dbReference>
<dbReference type="RNAct" id="P60469">
    <property type="molecule type" value="protein"/>
</dbReference>
<dbReference type="Bgee" id="ENSMUSG00000003863">
    <property type="expression patterns" value="Expressed in primary visual cortex and 142 other cell types or tissues"/>
</dbReference>
<dbReference type="ExpressionAtlas" id="P60469">
    <property type="expression patterns" value="baseline and differential"/>
</dbReference>
<dbReference type="GO" id="GO:0001669">
    <property type="term" value="C:acrosomal vesicle"/>
    <property type="evidence" value="ECO:0000314"/>
    <property type="project" value="UniProtKB"/>
</dbReference>
<dbReference type="GO" id="GO:0098875">
    <property type="term" value="C:epididymosome"/>
    <property type="evidence" value="ECO:0000250"/>
    <property type="project" value="UniProtKB"/>
</dbReference>
<dbReference type="GO" id="GO:0098978">
    <property type="term" value="C:glutamatergic synapse"/>
    <property type="evidence" value="ECO:0000314"/>
    <property type="project" value="SynGO"/>
</dbReference>
<dbReference type="GO" id="GO:0048786">
    <property type="term" value="C:presynaptic active zone"/>
    <property type="evidence" value="ECO:0000314"/>
    <property type="project" value="SynGO"/>
</dbReference>
<dbReference type="GO" id="GO:0098831">
    <property type="term" value="C:presynaptic active zone cytoplasmic component"/>
    <property type="evidence" value="ECO:0000314"/>
    <property type="project" value="SynGO"/>
</dbReference>
<dbReference type="GO" id="GO:0045202">
    <property type="term" value="C:synapse"/>
    <property type="evidence" value="ECO:0000314"/>
    <property type="project" value="SynGO"/>
</dbReference>
<dbReference type="GO" id="GO:0007269">
    <property type="term" value="P:neurotransmitter secretion"/>
    <property type="evidence" value="ECO:0000250"/>
    <property type="project" value="ParkinsonsUK-UCL"/>
</dbReference>
<dbReference type="GO" id="GO:0048172">
    <property type="term" value="P:regulation of short-term neuronal synaptic plasticity"/>
    <property type="evidence" value="ECO:0000250"/>
    <property type="project" value="ParkinsonsUK-UCL"/>
</dbReference>
<dbReference type="GO" id="GO:0016081">
    <property type="term" value="P:synaptic vesicle docking"/>
    <property type="evidence" value="ECO:0000314"/>
    <property type="project" value="SynGO"/>
</dbReference>
<dbReference type="GO" id="GO:0016079">
    <property type="term" value="P:synaptic vesicle exocytosis"/>
    <property type="evidence" value="ECO:0000314"/>
    <property type="project" value="SynGO"/>
</dbReference>
<dbReference type="CDD" id="cd09562">
    <property type="entry name" value="SAM_liprin-alpha1_2_3_4_repeat1"/>
    <property type="match status" value="1"/>
</dbReference>
<dbReference type="CDD" id="cd09565">
    <property type="entry name" value="SAM_liprin-alpha1_2_3_4_repeat2"/>
    <property type="match status" value="1"/>
</dbReference>
<dbReference type="CDD" id="cd09568">
    <property type="entry name" value="SAM_liprin-alpha1_2_3_4_repeat3"/>
    <property type="match status" value="1"/>
</dbReference>
<dbReference type="FunFam" id="1.10.150.50:FF:000003">
    <property type="entry name" value="liprin-alpha-2 isoform X1"/>
    <property type="match status" value="1"/>
</dbReference>
<dbReference type="FunFam" id="1.10.150.50:FF:000002">
    <property type="entry name" value="PTPRF interacting protein alpha 1"/>
    <property type="match status" value="1"/>
</dbReference>
<dbReference type="FunFam" id="1.10.150.50:FF:000004">
    <property type="entry name" value="PTPRF interacting protein alpha 1"/>
    <property type="match status" value="1"/>
</dbReference>
<dbReference type="Gene3D" id="1.10.287.1490">
    <property type="match status" value="1"/>
</dbReference>
<dbReference type="Gene3D" id="1.10.150.50">
    <property type="entry name" value="Transcription Factor, Ets-1"/>
    <property type="match status" value="3"/>
</dbReference>
<dbReference type="InterPro" id="IPR029515">
    <property type="entry name" value="Liprin"/>
</dbReference>
<dbReference type="InterPro" id="IPR037620">
    <property type="entry name" value="Liprin-alpha_SAM_rpt_1"/>
</dbReference>
<dbReference type="InterPro" id="IPR037621">
    <property type="entry name" value="Liprin-alpha_SAM_rpt_2"/>
</dbReference>
<dbReference type="InterPro" id="IPR037622">
    <property type="entry name" value="Liprin-alpha_SAM_rpt_3"/>
</dbReference>
<dbReference type="InterPro" id="IPR001660">
    <property type="entry name" value="SAM"/>
</dbReference>
<dbReference type="InterPro" id="IPR013761">
    <property type="entry name" value="SAM/pointed_sf"/>
</dbReference>
<dbReference type="PANTHER" id="PTHR12587">
    <property type="entry name" value="LAR INTERACTING PROTEIN LIP -RELATED PROTEIN"/>
    <property type="match status" value="1"/>
</dbReference>
<dbReference type="PANTHER" id="PTHR12587:SF4">
    <property type="entry name" value="LIPRIN-ALPHA-3"/>
    <property type="match status" value="1"/>
</dbReference>
<dbReference type="Pfam" id="PF00536">
    <property type="entry name" value="SAM_1"/>
    <property type="match status" value="2"/>
</dbReference>
<dbReference type="Pfam" id="PF07647">
    <property type="entry name" value="SAM_2"/>
    <property type="match status" value="1"/>
</dbReference>
<dbReference type="SMART" id="SM00454">
    <property type="entry name" value="SAM"/>
    <property type="match status" value="3"/>
</dbReference>
<dbReference type="SUPFAM" id="SSF47769">
    <property type="entry name" value="SAM/Pointed domain"/>
    <property type="match status" value="3"/>
</dbReference>
<dbReference type="PROSITE" id="PS50105">
    <property type="entry name" value="SAM_DOMAIN"/>
    <property type="match status" value="3"/>
</dbReference>
<protein>
    <recommendedName>
        <fullName>Liprin-alpha-3</fullName>
    </recommendedName>
    <alternativeName>
        <fullName>Protein tyrosine phosphatase receptor type f polypeptide-interacting protein alpha-3</fullName>
        <shortName>PTPRF-interacting protein alpha-3</shortName>
    </alternativeName>
</protein>
<accession>P60469</accession>
<accession>B8QI35</accession>
<comment type="function">
    <text evidence="1">May regulate the disassembly of focal adhesions. May localize receptor-like tyrosine phosphatases type 2A at specific sites on the plasma membrane, possibly regulating their interaction with the extracellular environment and their association with substrates.</text>
</comment>
<comment type="subunit">
    <text evidence="1 3">Forms homodimers and heterodimers with liprins-alpha and liprins-beta. Interacts with the second PTPase domain of PTPRD, PTPRF and PTPRS. Binds RIMS1, RIMS2, RIMS3 and RIMS4.</text>
</comment>
<comment type="subcellular location">
    <subcellularLocation>
        <location evidence="3">Cytoplasm</location>
    </subcellularLocation>
    <subcellularLocation>
        <location evidence="7">Cytoplasmic vesicle</location>
        <location evidence="7">Secretory vesicle</location>
        <location evidence="7">Acrosome</location>
    </subcellularLocation>
    <text evidence="3">Also detected in epididymosome.</text>
</comment>
<comment type="alternative products">
    <event type="alternative splicing"/>
    <isoform>
        <id>P60469-1</id>
        <name>1</name>
        <sequence type="displayed"/>
    </isoform>
    <isoform>
        <id>P60469-2</id>
        <name>2</name>
        <sequence type="described" ref="VSP_057923"/>
    </isoform>
</comment>
<comment type="tissue specificity">
    <text evidence="7">Detected in sperm (at protein level).</text>
</comment>
<comment type="domain">
    <text evidence="1">The N-terminal coiled coil regions mediate homodimerization preferentially and heterodimerization type alpha/alpha. The C-terminal, non-coiled coil regions mediate heterodimerization type alpha/beta and interaction with PTPRD, PTPRF and PTPRS.</text>
</comment>
<comment type="similarity">
    <text evidence="9">Belongs to the liprin family. Liprin-alpha subfamily.</text>
</comment>
<name>LIPA3_MOUSE</name>
<organism>
    <name type="scientific">Mus musculus</name>
    <name type="common">Mouse</name>
    <dbReference type="NCBI Taxonomy" id="10090"/>
    <lineage>
        <taxon>Eukaryota</taxon>
        <taxon>Metazoa</taxon>
        <taxon>Chordata</taxon>
        <taxon>Craniata</taxon>
        <taxon>Vertebrata</taxon>
        <taxon>Euteleostomi</taxon>
        <taxon>Mammalia</taxon>
        <taxon>Eutheria</taxon>
        <taxon>Euarchontoglires</taxon>
        <taxon>Glires</taxon>
        <taxon>Rodentia</taxon>
        <taxon>Myomorpha</taxon>
        <taxon>Muroidea</taxon>
        <taxon>Muridae</taxon>
        <taxon>Murinae</taxon>
        <taxon>Mus</taxon>
        <taxon>Mus</taxon>
    </lineage>
</organism>